<organism>
    <name type="scientific">Kalanchoe daigremontiana</name>
    <name type="common">Devil's backbone</name>
    <name type="synonym">Bryophyllum daigremontianum</name>
    <dbReference type="NCBI Taxonomy" id="23013"/>
    <lineage>
        <taxon>Eukaryota</taxon>
        <taxon>Viridiplantae</taxon>
        <taxon>Streptophyta</taxon>
        <taxon>Embryophyta</taxon>
        <taxon>Tracheophyta</taxon>
        <taxon>Spermatophyta</taxon>
        <taxon>Magnoliopsida</taxon>
        <taxon>eudicotyledons</taxon>
        <taxon>Gunneridae</taxon>
        <taxon>Pentapetalae</taxon>
        <taxon>Saxifragales</taxon>
        <taxon>Crassulaceae</taxon>
        <taxon>Kalanchoe</taxon>
    </lineage>
</organism>
<feature type="chain" id="PRO_0000418481" description="Lupeol synthase">
    <location>
        <begin position="1"/>
        <end position="765"/>
    </location>
</feature>
<feature type="repeat" description="PFTB 1">
    <location>
        <begin position="148"/>
        <end position="189"/>
    </location>
</feature>
<feature type="repeat" description="PFTB 2">
    <location>
        <begin position="640"/>
        <end position="681"/>
    </location>
</feature>
<feature type="active site" description="Proton donor" evidence="1">
    <location>
        <position position="485"/>
    </location>
</feature>
<evidence type="ECO:0000250" key="1">
    <source>
        <dbReference type="UniProtKB" id="P48449"/>
    </source>
</evidence>
<evidence type="ECO:0000269" key="2">
    <source>
    </source>
</evidence>
<evidence type="ECO:0000305" key="3"/>
<name>LUPS_KALDA</name>
<accession>E2IUA9</accession>
<dbReference type="EC" id="5.4.99.41"/>
<dbReference type="EMBL" id="HM623871">
    <property type="protein sequence ID" value="ADK35126.1"/>
    <property type="molecule type" value="mRNA"/>
</dbReference>
<dbReference type="SMR" id="E2IUA9"/>
<dbReference type="GO" id="GO:0005811">
    <property type="term" value="C:lipid droplet"/>
    <property type="evidence" value="ECO:0007669"/>
    <property type="project" value="InterPro"/>
</dbReference>
<dbReference type="GO" id="GO:0042300">
    <property type="term" value="F:beta-amyrin synthase activity"/>
    <property type="evidence" value="ECO:0007669"/>
    <property type="project" value="TreeGrafter"/>
</dbReference>
<dbReference type="GO" id="GO:0016866">
    <property type="term" value="F:intramolecular transferase activity"/>
    <property type="evidence" value="ECO:0000314"/>
    <property type="project" value="UniProtKB"/>
</dbReference>
<dbReference type="GO" id="GO:0042299">
    <property type="term" value="F:lupeol synthase activity"/>
    <property type="evidence" value="ECO:0007669"/>
    <property type="project" value="UniProtKB-EC"/>
</dbReference>
<dbReference type="GO" id="GO:0016104">
    <property type="term" value="P:triterpenoid biosynthetic process"/>
    <property type="evidence" value="ECO:0000314"/>
    <property type="project" value="UniProtKB"/>
</dbReference>
<dbReference type="CDD" id="cd02892">
    <property type="entry name" value="SQCY_1"/>
    <property type="match status" value="1"/>
</dbReference>
<dbReference type="FunFam" id="1.50.10.20:FF:000011">
    <property type="entry name" value="Terpene cyclase/mutase family member"/>
    <property type="match status" value="1"/>
</dbReference>
<dbReference type="FunFam" id="1.50.10.20:FF:000064">
    <property type="entry name" value="Uncharacterized protein"/>
    <property type="match status" value="1"/>
</dbReference>
<dbReference type="Gene3D" id="1.50.10.20">
    <property type="match status" value="2"/>
</dbReference>
<dbReference type="InterPro" id="IPR032696">
    <property type="entry name" value="SQ_cyclase_C"/>
</dbReference>
<dbReference type="InterPro" id="IPR032697">
    <property type="entry name" value="SQ_cyclase_N"/>
</dbReference>
<dbReference type="InterPro" id="IPR018333">
    <property type="entry name" value="Squalene_cyclase"/>
</dbReference>
<dbReference type="InterPro" id="IPR002365">
    <property type="entry name" value="Terpene_synthase_CS"/>
</dbReference>
<dbReference type="InterPro" id="IPR008930">
    <property type="entry name" value="Terpenoid_cyclase/PrenylTrfase"/>
</dbReference>
<dbReference type="NCBIfam" id="TIGR01787">
    <property type="entry name" value="squalene_cyclas"/>
    <property type="match status" value="1"/>
</dbReference>
<dbReference type="PANTHER" id="PTHR11764">
    <property type="entry name" value="TERPENE CYCLASE/MUTASE FAMILY MEMBER"/>
    <property type="match status" value="1"/>
</dbReference>
<dbReference type="PANTHER" id="PTHR11764:SF71">
    <property type="entry name" value="TERPENE CYCLASE_MUTASE FAMILY MEMBER"/>
    <property type="match status" value="1"/>
</dbReference>
<dbReference type="Pfam" id="PF13243">
    <property type="entry name" value="SQHop_cyclase_C"/>
    <property type="match status" value="1"/>
</dbReference>
<dbReference type="Pfam" id="PF13249">
    <property type="entry name" value="SQHop_cyclase_N"/>
    <property type="match status" value="1"/>
</dbReference>
<dbReference type="SFLD" id="SFLDG01016">
    <property type="entry name" value="Prenyltransferase_Like_2"/>
    <property type="match status" value="1"/>
</dbReference>
<dbReference type="SUPFAM" id="SSF48239">
    <property type="entry name" value="Terpenoid cyclases/Protein prenyltransferases"/>
    <property type="match status" value="2"/>
</dbReference>
<dbReference type="PROSITE" id="PS01074">
    <property type="entry name" value="TERPENE_SYNTHASES"/>
    <property type="match status" value="1"/>
</dbReference>
<comment type="function">
    <text evidence="2">Oxidosqualene cyclase that generates lupeol, a triterpenoid product. Lupeol is probably required to coat the leaf exterior as a defense compound against pathogens or herbivores.</text>
</comment>
<comment type="catalytic activity">
    <reaction evidence="2">
        <text>(S)-2,3-epoxysqualene = lupeol</text>
        <dbReference type="Rhea" id="RHEA:31383"/>
        <dbReference type="ChEBI" id="CHEBI:6570"/>
        <dbReference type="ChEBI" id="CHEBI:15441"/>
        <dbReference type="EC" id="5.4.99.41"/>
    </reaction>
</comment>
<comment type="tissue specificity">
    <text evidence="2">Expressed only in the epidermal cells on both sides of the leaf and not in internal leaf tissues.</text>
</comment>
<comment type="similarity">
    <text evidence="3">Belongs to the terpene cyclase/mutase family.</text>
</comment>
<proteinExistence type="evidence at protein level"/>
<reference key="1">
    <citation type="journal article" date="2010" name="J. Biol. Chem.">
        <title>Cloning and characterization of oxidosqualene cyclases from Kalanchoe daigremontiana: enzymes catalyzing up to 10 rearrangement steps yielding friedelin and other triterpenoids.</title>
        <authorList>
            <person name="Wang Z."/>
            <person name="Yeats T."/>
            <person name="Han H."/>
            <person name="Jetter R."/>
        </authorList>
    </citation>
    <scope>NUCLEOTIDE SEQUENCE [MRNA]</scope>
    <scope>FUNCTION</scope>
    <scope>CATALYTIC ACTIVITY</scope>
    <scope>TISSUE SPECIFICITY</scope>
</reference>
<sequence>MWKLKIADGGSNPYIFTTNNFVGRQIWEFDPQATDPQQLAKVEAARLDFYHNRYKLKPNSDLLWRMQFLEEKAFTQTIPQVKVEDGEEVSYEAVTAALRRGVHLYSALQASDGHWPAENAGPMFFMPPMVMCLYITGHLNAIFTEEHRSETLRYIYYHQNEDGGWGFHIEGHSTMFGTVLNYICMRLLGEGPEGGQDNAVSRGRKWILDHGGATSIPSWGKTWLSIMGLCDWSGCNPMPPEFWLLPSYLPMHPGKMWCYCRMVYMPMSYLYGKRFTARITPLILQLREEIHIQPYDQIDWKKVRHVCCKEDMYYPHPLLQDLLWDTLYLTTEPLLTRWPLNKLIRKRALQTTMKHIHYEDENSRYITIGCVEKVLCMLACWVEDPNGDYFKKHLARIPDYLWIAEDGMKMQSFGSQHWDTAFSIQALLASNMAEEIGITLAKGHDFIKKSQVKDNPSGDFKGMYRHISKGAWTFSDQDHGWQVSDCTAEGLKCCLLFSMMQPEVVGESMAPESLYNSVNVLLSLQSQNGGLPAWEPAGAPEWLELLNPTEFFENIVIEHEYVECTSSAVQALVLFKKLYPLHRRKEVERFITNGAKYLEDIQMPDGSWYGNWGVCFTYGAWFALEGLSAAGKTYNNCAAVRKGVDFLLNIQLEDGGWGESYQSCPDKKYVPLEDNRSNLVQTSWALMGLIYAGQADRDPTPLHRAAQLLINSQLEDGDFPQQEITGVFQRNCMLHYAAYRNIFPLWALAEYRRQIQLHSEATKMV</sequence>
<keyword id="KW-0413">Isomerase</keyword>
<keyword id="KW-0677">Repeat</keyword>
<protein>
    <recommendedName>
        <fullName>Lupeol synthase</fullName>
        <shortName>KdLUS</shortName>
        <ecNumber>5.4.99.41</ecNumber>
    </recommendedName>
</protein>